<evidence type="ECO:0000255" key="1"/>
<evidence type="ECO:0000269" key="2">
    <source>
    </source>
</evidence>
<keyword id="KW-0027">Amidation</keyword>
<keyword id="KW-0165">Cleavage on pair of basic residues</keyword>
<keyword id="KW-0903">Direct protein sequencing</keyword>
<keyword id="KW-0527">Neuropeptide</keyword>
<keyword id="KW-1185">Reference proteome</keyword>
<keyword id="KW-0732">Signal</keyword>
<organism>
    <name type="scientific">Caenorhabditis elegans</name>
    <dbReference type="NCBI Taxonomy" id="6239"/>
    <lineage>
        <taxon>Eukaryota</taxon>
        <taxon>Metazoa</taxon>
        <taxon>Ecdysozoa</taxon>
        <taxon>Nematoda</taxon>
        <taxon>Chromadorea</taxon>
        <taxon>Rhabditida</taxon>
        <taxon>Rhabditina</taxon>
        <taxon>Rhabditomorpha</taxon>
        <taxon>Rhabditoidea</taxon>
        <taxon>Rhabditidae</taxon>
        <taxon>Peloderinae</taxon>
        <taxon>Caenorhabditis</taxon>
    </lineage>
</organism>
<accession>Q09367</accession>
<sequence>MMSTLALVSLAIFGIAVVCAAPKPATVPVANEEDYLAALYGFEAPGSQFKGAPLQSKRHISPSYDVEIDAGNMRNLLDIGKRSAPMASDYGNQFQMYNRLIDAGKKKRSPAISPAYQFENAFGLSEALERAGRR</sequence>
<protein>
    <recommendedName>
        <fullName>Neuropeptide-like peptide 11</fullName>
    </recommendedName>
</protein>
<gene>
    <name type="primary">nlp-11</name>
    <name type="ORF">ZK1320.10</name>
</gene>
<reference key="1">
    <citation type="journal article" date="1998" name="Science">
        <title>Genome sequence of the nematode C. elegans: a platform for investigating biology.</title>
        <authorList>
            <consortium name="The C. elegans sequencing consortium"/>
        </authorList>
    </citation>
    <scope>NUCLEOTIDE SEQUENCE [LARGE SCALE GENOMIC DNA]</scope>
    <source>
        <strain>Bristol N2</strain>
    </source>
</reference>
<reference key="2">
    <citation type="journal article" date="2005" name="Biochem. Biophys. Res. Commun.">
        <title>Discovering neuropeptides in Caenorhabditis elegans by two dimensional liquid chromatography and mass spectrometry.</title>
        <authorList>
            <person name="Husson S.J."/>
            <person name="Clynen E."/>
            <person name="Baggerman G."/>
            <person name="De Loof A."/>
            <person name="Schoofs L."/>
        </authorList>
    </citation>
    <scope>PROTEIN SEQUENCE OF 109-131</scope>
    <scope>AMIDATION AT ALA-131</scope>
</reference>
<dbReference type="EMBL" id="Z46934">
    <property type="protein sequence ID" value="CAA87048.1"/>
    <property type="molecule type" value="Genomic_DNA"/>
</dbReference>
<dbReference type="PIR" id="T27756">
    <property type="entry name" value="T27756"/>
</dbReference>
<dbReference type="RefSeq" id="NP_496091.1">
    <property type="nucleotide sequence ID" value="NM_063690.7"/>
</dbReference>
<dbReference type="BioGRID" id="56096">
    <property type="interactions" value="1"/>
</dbReference>
<dbReference type="FunCoup" id="Q09367">
    <property type="interactions" value="140"/>
</dbReference>
<dbReference type="IntAct" id="Q09367">
    <property type="interactions" value="1"/>
</dbReference>
<dbReference type="STRING" id="6239.ZK1320.10.1"/>
<dbReference type="PaxDb" id="6239-ZK1320.10"/>
<dbReference type="PeptideAtlas" id="Q09367"/>
<dbReference type="EnsemblMetazoa" id="ZK1320.10.1">
    <property type="protein sequence ID" value="ZK1320.10.1"/>
    <property type="gene ID" value="WBGene00003749"/>
</dbReference>
<dbReference type="GeneID" id="191566"/>
<dbReference type="KEGG" id="cel:CELE_ZK1320.10"/>
<dbReference type="UCSC" id="ZK1320.10.1">
    <property type="organism name" value="c. elegans"/>
</dbReference>
<dbReference type="AGR" id="WB:WBGene00003749"/>
<dbReference type="CTD" id="191566"/>
<dbReference type="WormBase" id="ZK1320.10">
    <property type="protein sequence ID" value="CE01699"/>
    <property type="gene ID" value="WBGene00003749"/>
    <property type="gene designation" value="nlp-11"/>
</dbReference>
<dbReference type="eggNOG" id="ENOG502TI60">
    <property type="taxonomic scope" value="Eukaryota"/>
</dbReference>
<dbReference type="HOGENOM" id="CLU_156773_0_0_1"/>
<dbReference type="InParanoid" id="Q09367"/>
<dbReference type="OMA" id="SPAYQFE"/>
<dbReference type="OrthoDB" id="5831695at2759"/>
<dbReference type="PRO" id="PR:Q09367"/>
<dbReference type="Proteomes" id="UP000001940">
    <property type="component" value="Chromosome II"/>
</dbReference>
<dbReference type="Bgee" id="WBGene00003749">
    <property type="expression patterns" value="Expressed in larva and 3 other cell types or tissues"/>
</dbReference>
<dbReference type="GO" id="GO:0007218">
    <property type="term" value="P:neuropeptide signaling pathway"/>
    <property type="evidence" value="ECO:0007669"/>
    <property type="project" value="UniProtKB-KW"/>
</dbReference>
<proteinExistence type="evidence at protein level"/>
<name>NLP11_CAEEL</name>
<feature type="signal peptide" evidence="1">
    <location>
        <begin position="1"/>
        <end position="20"/>
    </location>
</feature>
<feature type="propeptide" id="PRO_0000253591">
    <location>
        <begin position="21"/>
        <end position="106"/>
    </location>
</feature>
<feature type="peptide" id="PRO_0000065575" description="Neuropeptide-like peptide 11">
    <location>
        <begin position="109"/>
        <end position="131"/>
    </location>
</feature>
<feature type="modified residue" description="Alanine amide" evidence="2">
    <location>
        <position position="131"/>
    </location>
</feature>